<dbReference type="EC" id="4.2.1.9" evidence="1"/>
<dbReference type="EMBL" id="CP000521">
    <property type="protein sequence ID" value="ABO13844.2"/>
    <property type="molecule type" value="Genomic_DNA"/>
</dbReference>
<dbReference type="RefSeq" id="WP_001113592.1">
    <property type="nucleotide sequence ID" value="NZ_CP053098.1"/>
</dbReference>
<dbReference type="SMR" id="A3MAA0"/>
<dbReference type="KEGG" id="acb:A1S_3455"/>
<dbReference type="HOGENOM" id="CLU_014271_4_2_6"/>
<dbReference type="UniPathway" id="UPA00047">
    <property type="reaction ID" value="UER00057"/>
</dbReference>
<dbReference type="UniPathway" id="UPA00049">
    <property type="reaction ID" value="UER00061"/>
</dbReference>
<dbReference type="GO" id="GO:0005829">
    <property type="term" value="C:cytosol"/>
    <property type="evidence" value="ECO:0007669"/>
    <property type="project" value="TreeGrafter"/>
</dbReference>
<dbReference type="GO" id="GO:0051537">
    <property type="term" value="F:2 iron, 2 sulfur cluster binding"/>
    <property type="evidence" value="ECO:0007669"/>
    <property type="project" value="UniProtKB-UniRule"/>
</dbReference>
<dbReference type="GO" id="GO:0004160">
    <property type="term" value="F:dihydroxy-acid dehydratase activity"/>
    <property type="evidence" value="ECO:0007669"/>
    <property type="project" value="UniProtKB-UniRule"/>
</dbReference>
<dbReference type="GO" id="GO:0000287">
    <property type="term" value="F:magnesium ion binding"/>
    <property type="evidence" value="ECO:0007669"/>
    <property type="project" value="UniProtKB-UniRule"/>
</dbReference>
<dbReference type="GO" id="GO:0009097">
    <property type="term" value="P:isoleucine biosynthetic process"/>
    <property type="evidence" value="ECO:0007669"/>
    <property type="project" value="UniProtKB-UniRule"/>
</dbReference>
<dbReference type="GO" id="GO:0009099">
    <property type="term" value="P:L-valine biosynthetic process"/>
    <property type="evidence" value="ECO:0007669"/>
    <property type="project" value="UniProtKB-UniRule"/>
</dbReference>
<dbReference type="FunFam" id="3.50.30.80:FF:000001">
    <property type="entry name" value="Dihydroxy-acid dehydratase"/>
    <property type="match status" value="1"/>
</dbReference>
<dbReference type="Gene3D" id="3.50.30.80">
    <property type="entry name" value="IlvD/EDD C-terminal domain-like"/>
    <property type="match status" value="1"/>
</dbReference>
<dbReference type="HAMAP" id="MF_00012">
    <property type="entry name" value="IlvD"/>
    <property type="match status" value="1"/>
</dbReference>
<dbReference type="InterPro" id="IPR042096">
    <property type="entry name" value="Dihydro-acid_dehy_C"/>
</dbReference>
<dbReference type="InterPro" id="IPR004404">
    <property type="entry name" value="DihydroxyA_deHydtase"/>
</dbReference>
<dbReference type="InterPro" id="IPR020558">
    <property type="entry name" value="DiOHA_6PGluconate_deHydtase_CS"/>
</dbReference>
<dbReference type="InterPro" id="IPR056740">
    <property type="entry name" value="ILV_EDD_C"/>
</dbReference>
<dbReference type="InterPro" id="IPR000581">
    <property type="entry name" value="ILV_EDD_N"/>
</dbReference>
<dbReference type="InterPro" id="IPR037237">
    <property type="entry name" value="IlvD/EDD_N"/>
</dbReference>
<dbReference type="NCBIfam" id="TIGR00110">
    <property type="entry name" value="ilvD"/>
    <property type="match status" value="1"/>
</dbReference>
<dbReference type="NCBIfam" id="NF009103">
    <property type="entry name" value="PRK12448.1"/>
    <property type="match status" value="1"/>
</dbReference>
<dbReference type="PANTHER" id="PTHR43661">
    <property type="entry name" value="D-XYLONATE DEHYDRATASE"/>
    <property type="match status" value="1"/>
</dbReference>
<dbReference type="PANTHER" id="PTHR43661:SF3">
    <property type="entry name" value="D-XYLONATE DEHYDRATASE YAGF-RELATED"/>
    <property type="match status" value="1"/>
</dbReference>
<dbReference type="Pfam" id="PF24877">
    <property type="entry name" value="ILV_EDD_C"/>
    <property type="match status" value="1"/>
</dbReference>
<dbReference type="Pfam" id="PF00920">
    <property type="entry name" value="ILVD_EDD_N"/>
    <property type="match status" value="1"/>
</dbReference>
<dbReference type="SUPFAM" id="SSF143975">
    <property type="entry name" value="IlvD/EDD N-terminal domain-like"/>
    <property type="match status" value="1"/>
</dbReference>
<dbReference type="SUPFAM" id="SSF52016">
    <property type="entry name" value="LeuD/IlvD-like"/>
    <property type="match status" value="1"/>
</dbReference>
<dbReference type="PROSITE" id="PS00886">
    <property type="entry name" value="ILVD_EDD_1"/>
    <property type="match status" value="1"/>
</dbReference>
<dbReference type="PROSITE" id="PS00887">
    <property type="entry name" value="ILVD_EDD_2"/>
    <property type="match status" value="1"/>
</dbReference>
<reference key="1">
    <citation type="journal article" date="2007" name="Genes Dev.">
        <title>New insights into Acinetobacter baumannii pathogenesis revealed by high-density pyrosequencing and transposon mutagenesis.</title>
        <authorList>
            <person name="Smith M.G."/>
            <person name="Gianoulis T.A."/>
            <person name="Pukatzki S."/>
            <person name="Mekalanos J.J."/>
            <person name="Ornston L.N."/>
            <person name="Gerstein M."/>
            <person name="Snyder M."/>
        </authorList>
    </citation>
    <scope>NUCLEOTIDE SEQUENCE [LARGE SCALE GENOMIC DNA]</scope>
    <source>
        <strain>ATCC 17978 / DSM 105126 / CIP 53.77 / LMG 1025 / NCDC KC755 / 5377</strain>
    </source>
</reference>
<feature type="chain" id="PRO_1000089361" description="Dihydroxy-acid dehydratase">
    <location>
        <begin position="1"/>
        <end position="609"/>
    </location>
</feature>
<feature type="active site" description="Proton acceptor" evidence="1">
    <location>
        <position position="517"/>
    </location>
</feature>
<feature type="binding site" evidence="1">
    <location>
        <position position="81"/>
    </location>
    <ligand>
        <name>Mg(2+)</name>
        <dbReference type="ChEBI" id="CHEBI:18420"/>
    </ligand>
</feature>
<feature type="binding site" evidence="1">
    <location>
        <position position="122"/>
    </location>
    <ligand>
        <name>[2Fe-2S] cluster</name>
        <dbReference type="ChEBI" id="CHEBI:190135"/>
    </ligand>
</feature>
<feature type="binding site" evidence="1">
    <location>
        <position position="123"/>
    </location>
    <ligand>
        <name>Mg(2+)</name>
        <dbReference type="ChEBI" id="CHEBI:18420"/>
    </ligand>
</feature>
<feature type="binding site" description="via carbamate group" evidence="1">
    <location>
        <position position="124"/>
    </location>
    <ligand>
        <name>Mg(2+)</name>
        <dbReference type="ChEBI" id="CHEBI:18420"/>
    </ligand>
</feature>
<feature type="binding site" evidence="1">
    <location>
        <position position="195"/>
    </location>
    <ligand>
        <name>[2Fe-2S] cluster</name>
        <dbReference type="ChEBI" id="CHEBI:190135"/>
    </ligand>
</feature>
<feature type="binding site" evidence="1">
    <location>
        <position position="491"/>
    </location>
    <ligand>
        <name>Mg(2+)</name>
        <dbReference type="ChEBI" id="CHEBI:18420"/>
    </ligand>
</feature>
<feature type="modified residue" description="N6-carboxylysine" evidence="1">
    <location>
        <position position="124"/>
    </location>
</feature>
<accession>A3MAA0</accession>
<keyword id="KW-0001">2Fe-2S</keyword>
<keyword id="KW-0028">Amino-acid biosynthesis</keyword>
<keyword id="KW-0100">Branched-chain amino acid biosynthesis</keyword>
<keyword id="KW-0408">Iron</keyword>
<keyword id="KW-0411">Iron-sulfur</keyword>
<keyword id="KW-0456">Lyase</keyword>
<keyword id="KW-0460">Magnesium</keyword>
<keyword id="KW-0479">Metal-binding</keyword>
<evidence type="ECO:0000255" key="1">
    <source>
        <dbReference type="HAMAP-Rule" id="MF_00012"/>
    </source>
</evidence>
<gene>
    <name evidence="1" type="primary">ilvD</name>
    <name type="ordered locus">A1S_3455</name>
</gene>
<name>ILVD_ACIBT</name>
<protein>
    <recommendedName>
        <fullName evidence="1">Dihydroxy-acid dehydratase</fullName>
        <shortName evidence="1">DAD</shortName>
        <ecNumber evidence="1">4.2.1.9</ecNumber>
    </recommendedName>
</protein>
<sequence>MPDYRSKTSTHGRNMAGARGLWRATGMKDEDFGKPIIAVVNSFTQFVPGHVHLKDLGQLVAAEIQAAGGVAKEFNTIAVDDGIAMGHDGMLYSLPSRDLIADSVEYMVNAHCADAMVCISNCDKITPGMLMAAMRLNIPVVFVSGGPMEAGKVKFRGDEKAIDLVDAMVVAADDSYTDEEVAEFERSACPTCGSCSGMFTANSMNCLTEALGLSLPGNGSIVATHANRKKLFLKAGQLIVELAKRYYEQNDASILPRSIATKAAFKNAMTLDIAMGGSTNTVLHLLAAANEAEVDFTMDDIDELSRRVPVLSKVAPAKQDVHMEDVHRAGGIMAILGELDRANLLDVSVPTVHEKTLKDALDKWDIIRTEDPDVYEFYRSSPGGVPTQVAFSQNRYYSTLDGDREKGVIRNAEHAFSKDGGLAVLYGNIALDGCIVKTAGVDESILKFTGSARVFESQDAAVEAILGNEIKAGDVVVIRYEGPRGGPGMQEMLYPTSYLKSKGLGKDCALVTDGRFSGGSSGLSIGHVSPEAAEGGAIGLVEDGDTIEIDIPNRTIHLNIDDATLAHRRTVQEAKGWHPKEERKRKVSKALKVYAMHTTSAAKGAVRIL</sequence>
<organism>
    <name type="scientific">Acinetobacter baumannii (strain ATCC 17978 / DSM 105126 / CIP 53.77 / LMG 1025 / NCDC KC755 / 5377)</name>
    <dbReference type="NCBI Taxonomy" id="400667"/>
    <lineage>
        <taxon>Bacteria</taxon>
        <taxon>Pseudomonadati</taxon>
        <taxon>Pseudomonadota</taxon>
        <taxon>Gammaproteobacteria</taxon>
        <taxon>Moraxellales</taxon>
        <taxon>Moraxellaceae</taxon>
        <taxon>Acinetobacter</taxon>
        <taxon>Acinetobacter calcoaceticus/baumannii complex</taxon>
    </lineage>
</organism>
<comment type="function">
    <text evidence="1">Functions in the biosynthesis of branched-chain amino acids. Catalyzes the dehydration of (2R,3R)-2,3-dihydroxy-3-methylpentanoate (2,3-dihydroxy-3-methylvalerate) into 2-oxo-3-methylpentanoate (2-oxo-3-methylvalerate) and of (2R)-2,3-dihydroxy-3-methylbutanoate (2,3-dihydroxyisovalerate) into 2-oxo-3-methylbutanoate (2-oxoisovalerate), the penultimate precursor to L-isoleucine and L-valine, respectively.</text>
</comment>
<comment type="catalytic activity">
    <reaction evidence="1">
        <text>(2R)-2,3-dihydroxy-3-methylbutanoate = 3-methyl-2-oxobutanoate + H2O</text>
        <dbReference type="Rhea" id="RHEA:24809"/>
        <dbReference type="ChEBI" id="CHEBI:11851"/>
        <dbReference type="ChEBI" id="CHEBI:15377"/>
        <dbReference type="ChEBI" id="CHEBI:49072"/>
        <dbReference type="EC" id="4.2.1.9"/>
    </reaction>
    <physiologicalReaction direction="left-to-right" evidence="1">
        <dbReference type="Rhea" id="RHEA:24810"/>
    </physiologicalReaction>
</comment>
<comment type="catalytic activity">
    <reaction evidence="1">
        <text>(2R,3R)-2,3-dihydroxy-3-methylpentanoate = (S)-3-methyl-2-oxopentanoate + H2O</text>
        <dbReference type="Rhea" id="RHEA:27694"/>
        <dbReference type="ChEBI" id="CHEBI:15377"/>
        <dbReference type="ChEBI" id="CHEBI:35146"/>
        <dbReference type="ChEBI" id="CHEBI:49258"/>
        <dbReference type="EC" id="4.2.1.9"/>
    </reaction>
    <physiologicalReaction direction="left-to-right" evidence="1">
        <dbReference type="Rhea" id="RHEA:27695"/>
    </physiologicalReaction>
</comment>
<comment type="cofactor">
    <cofactor evidence="1">
        <name>[2Fe-2S] cluster</name>
        <dbReference type="ChEBI" id="CHEBI:190135"/>
    </cofactor>
    <text evidence="1">Binds 1 [2Fe-2S] cluster per subunit. This cluster acts as a Lewis acid cofactor.</text>
</comment>
<comment type="cofactor">
    <cofactor evidence="1">
        <name>Mg(2+)</name>
        <dbReference type="ChEBI" id="CHEBI:18420"/>
    </cofactor>
</comment>
<comment type="pathway">
    <text evidence="1">Amino-acid biosynthesis; L-isoleucine biosynthesis; L-isoleucine from 2-oxobutanoate: step 3/4.</text>
</comment>
<comment type="pathway">
    <text evidence="1">Amino-acid biosynthesis; L-valine biosynthesis; L-valine from pyruvate: step 3/4.</text>
</comment>
<comment type="subunit">
    <text evidence="1">Homodimer.</text>
</comment>
<comment type="similarity">
    <text evidence="1">Belongs to the IlvD/Edd family.</text>
</comment>
<proteinExistence type="inferred from homology"/>